<keyword id="KW-0597">Phosphoprotein</keyword>
<keyword id="KW-1185">Reference proteome</keyword>
<keyword id="KW-0833">Ubl conjugation pathway</keyword>
<accession>Q9LYW0</accession>
<reference key="1">
    <citation type="journal article" date="1997" name="DNA Res.">
        <title>Structural analysis of Arabidopsis thaliana chromosome 5. I. Sequence features of the 1.6 Mb regions covered by twenty physically assigned P1 clones.</title>
        <authorList>
            <person name="Sato S."/>
            <person name="Kotani H."/>
            <person name="Nakamura Y."/>
            <person name="Kaneko T."/>
            <person name="Asamizu E."/>
            <person name="Fukami M."/>
            <person name="Miyajima N."/>
            <person name="Tabata S."/>
        </authorList>
    </citation>
    <scope>NUCLEOTIDE SEQUENCE [LARGE SCALE GENOMIC DNA]</scope>
    <source>
        <strain>cv. Columbia</strain>
    </source>
</reference>
<reference key="2">
    <citation type="journal article" date="2000" name="Nature">
        <title>Sequence and analysis of chromosome 5 of the plant Arabidopsis thaliana.</title>
        <authorList>
            <person name="Tabata S."/>
            <person name="Kaneko T."/>
            <person name="Nakamura Y."/>
            <person name="Kotani H."/>
            <person name="Kato T."/>
            <person name="Asamizu E."/>
            <person name="Miyajima N."/>
            <person name="Sasamoto S."/>
            <person name="Kimura T."/>
            <person name="Hosouchi T."/>
            <person name="Kawashima K."/>
            <person name="Kohara M."/>
            <person name="Matsumoto M."/>
            <person name="Matsuno A."/>
            <person name="Muraki A."/>
            <person name="Nakayama S."/>
            <person name="Nakazaki N."/>
            <person name="Naruo K."/>
            <person name="Okumura S."/>
            <person name="Shinpo S."/>
            <person name="Takeuchi C."/>
            <person name="Wada T."/>
            <person name="Watanabe A."/>
            <person name="Yamada M."/>
            <person name="Yasuda M."/>
            <person name="Sato S."/>
            <person name="de la Bastide M."/>
            <person name="Huang E."/>
            <person name="Spiegel L."/>
            <person name="Gnoj L."/>
            <person name="O'Shaughnessy A."/>
            <person name="Preston R."/>
            <person name="Habermann K."/>
            <person name="Murray J."/>
            <person name="Johnson D."/>
            <person name="Rohlfing T."/>
            <person name="Nelson J."/>
            <person name="Stoneking T."/>
            <person name="Pepin K."/>
            <person name="Spieth J."/>
            <person name="Sekhon M."/>
            <person name="Armstrong J."/>
            <person name="Becker M."/>
            <person name="Belter E."/>
            <person name="Cordum H."/>
            <person name="Cordes M."/>
            <person name="Courtney L."/>
            <person name="Courtney W."/>
            <person name="Dante M."/>
            <person name="Du H."/>
            <person name="Edwards J."/>
            <person name="Fryman J."/>
            <person name="Haakensen B."/>
            <person name="Lamar E."/>
            <person name="Latreille P."/>
            <person name="Leonard S."/>
            <person name="Meyer R."/>
            <person name="Mulvaney E."/>
            <person name="Ozersky P."/>
            <person name="Riley A."/>
            <person name="Strowmatt C."/>
            <person name="Wagner-McPherson C."/>
            <person name="Wollam A."/>
            <person name="Yoakum M."/>
            <person name="Bell M."/>
            <person name="Dedhia N."/>
            <person name="Parnell L."/>
            <person name="Shah R."/>
            <person name="Rodriguez M."/>
            <person name="Hoon See L."/>
            <person name="Vil D."/>
            <person name="Baker J."/>
            <person name="Kirchoff K."/>
            <person name="Toth K."/>
            <person name="King L."/>
            <person name="Bahret A."/>
            <person name="Miller B."/>
            <person name="Marra M.A."/>
            <person name="Martienssen R."/>
            <person name="McCombie W.R."/>
            <person name="Wilson R.K."/>
            <person name="Murphy G."/>
            <person name="Bancroft I."/>
            <person name="Volckaert G."/>
            <person name="Wambutt R."/>
            <person name="Duesterhoeft A."/>
            <person name="Stiekema W."/>
            <person name="Pohl T."/>
            <person name="Entian K.-D."/>
            <person name="Terryn N."/>
            <person name="Hartley N."/>
            <person name="Bent E."/>
            <person name="Johnson S."/>
            <person name="Langham S.-A."/>
            <person name="McCullagh B."/>
            <person name="Robben J."/>
            <person name="Grymonprez B."/>
            <person name="Zimmermann W."/>
            <person name="Ramsperger U."/>
            <person name="Wedler H."/>
            <person name="Balke K."/>
            <person name="Wedler E."/>
            <person name="Peters S."/>
            <person name="van Staveren M."/>
            <person name="Dirkse W."/>
            <person name="Mooijman P."/>
            <person name="Klein Lankhorst R."/>
            <person name="Weitzenegger T."/>
            <person name="Bothe G."/>
            <person name="Rose M."/>
            <person name="Hauf J."/>
            <person name="Berneiser S."/>
            <person name="Hempel S."/>
            <person name="Feldpausch M."/>
            <person name="Lamberth S."/>
            <person name="Villarroel R."/>
            <person name="Gielen J."/>
            <person name="Ardiles W."/>
            <person name="Bents O."/>
            <person name="Lemcke K."/>
            <person name="Kolesov G."/>
            <person name="Mayer K.F.X."/>
            <person name="Rudd S."/>
            <person name="Schoof H."/>
            <person name="Schueller C."/>
            <person name="Zaccaria P."/>
            <person name="Mewes H.-W."/>
            <person name="Bevan M."/>
            <person name="Fransz P.F."/>
        </authorList>
    </citation>
    <scope>NUCLEOTIDE SEQUENCE [LARGE SCALE GENOMIC DNA]</scope>
    <source>
        <strain>cv. Columbia</strain>
    </source>
</reference>
<reference key="3">
    <citation type="journal article" date="2017" name="Plant J.">
        <title>Araport11: a complete reannotation of the Arabidopsis thaliana reference genome.</title>
        <authorList>
            <person name="Cheng C.Y."/>
            <person name="Krishnakumar V."/>
            <person name="Chan A.P."/>
            <person name="Thibaud-Nissen F."/>
            <person name="Schobel S."/>
            <person name="Town C.D."/>
        </authorList>
    </citation>
    <scope>GENOME REANNOTATION</scope>
    <source>
        <strain>cv. Columbia</strain>
    </source>
</reference>
<reference key="4">
    <citation type="submission" date="2006-07" db="EMBL/GenBank/DDBJ databases">
        <title>Large-scale analysis of RIKEN Arabidopsis full-length (RAFL) cDNAs.</title>
        <authorList>
            <person name="Totoki Y."/>
            <person name="Seki M."/>
            <person name="Ishida J."/>
            <person name="Nakajima M."/>
            <person name="Enju A."/>
            <person name="Kamiya A."/>
            <person name="Narusaka M."/>
            <person name="Shin-i T."/>
            <person name="Nakagawa M."/>
            <person name="Sakamoto N."/>
            <person name="Oishi K."/>
            <person name="Kohara Y."/>
            <person name="Kobayashi M."/>
            <person name="Toyoda A."/>
            <person name="Sakaki Y."/>
            <person name="Sakurai T."/>
            <person name="Iida K."/>
            <person name="Akiyama K."/>
            <person name="Satou M."/>
            <person name="Toyoda T."/>
            <person name="Konagaya A."/>
            <person name="Carninci P."/>
            <person name="Kawai J."/>
            <person name="Hayashizaki Y."/>
            <person name="Shinozaki K."/>
        </authorList>
    </citation>
    <scope>NUCLEOTIDE SEQUENCE [LARGE SCALE MRNA]</scope>
    <source>
        <strain>cv. Columbia</strain>
    </source>
</reference>
<reference key="5">
    <citation type="journal article" date="2005" name="J. Biol. Chem.">
        <title>Cullins 3a and 3b assemble with members of the broad complex/tramtrack/bric-a-brac (BTB) protein family to form essential ubiquitin-protein ligases (E3s) in Arabidopsis.</title>
        <authorList>
            <person name="Gingerich D.J."/>
            <person name="Gagne J.M."/>
            <person name="Salter D.W."/>
            <person name="Hellmann H."/>
            <person name="Estelle M."/>
            <person name="Ma L."/>
            <person name="Vierstra R.D."/>
        </authorList>
    </citation>
    <scope>DOMAIN BTB</scope>
</reference>
<name>Y5325_ARATH</name>
<proteinExistence type="evidence at transcript level"/>
<protein>
    <recommendedName>
        <fullName>BTB/POZ domain-containing protein At5g03250</fullName>
    </recommendedName>
</protein>
<gene>
    <name type="ordered locus">At5g03250</name>
    <name type="ORF">F15A17_280</name>
    <name type="ORF">MOK16.16</name>
</gene>
<feature type="chain" id="PRO_0000409582" description="BTB/POZ domain-containing protein At5g03250">
    <location>
        <begin position="1"/>
        <end position="592"/>
    </location>
</feature>
<feature type="domain" description="BTB" evidence="3">
    <location>
        <begin position="28"/>
        <end position="98"/>
    </location>
</feature>
<feature type="domain" description="NPH3" evidence="4">
    <location>
        <begin position="217"/>
        <end position="502"/>
    </location>
</feature>
<feature type="modified residue" description="Phosphotyrosine" evidence="2">
    <location>
        <position position="443"/>
    </location>
</feature>
<comment type="function">
    <text evidence="1">May act as a substrate-specific adapter of an E3 ubiquitin-protein ligase complex (CUL3-RBX1-BTB) which mediates the ubiquitination and subsequent proteasomal degradation of target proteins.</text>
</comment>
<comment type="pathway">
    <text>Protein modification; protein ubiquitination.</text>
</comment>
<comment type="domain">
    <text evidence="5">The BTB/POZ domain mediates the interaction with some component of ubiquitin ligase complexes.</text>
</comment>
<comment type="similarity">
    <text evidence="4">Belongs to the NPH3 family.</text>
</comment>
<evidence type="ECO:0000250" key="1"/>
<evidence type="ECO:0000250" key="2">
    <source>
        <dbReference type="UniProtKB" id="Q9FMF5"/>
    </source>
</evidence>
<evidence type="ECO:0000255" key="3">
    <source>
        <dbReference type="PROSITE-ProRule" id="PRU00037"/>
    </source>
</evidence>
<evidence type="ECO:0000255" key="4">
    <source>
        <dbReference type="PROSITE-ProRule" id="PRU00982"/>
    </source>
</evidence>
<evidence type="ECO:0000269" key="5">
    <source>
    </source>
</evidence>
<dbReference type="EMBL" id="AB005240">
    <property type="protein sequence ID" value="BAB08385.1"/>
    <property type="molecule type" value="Genomic_DNA"/>
</dbReference>
<dbReference type="EMBL" id="AL163002">
    <property type="protein sequence ID" value="CAB86092.1"/>
    <property type="molecule type" value="Genomic_DNA"/>
</dbReference>
<dbReference type="EMBL" id="CP002688">
    <property type="protein sequence ID" value="AED90577.1"/>
    <property type="molecule type" value="Genomic_DNA"/>
</dbReference>
<dbReference type="EMBL" id="AK226794">
    <property type="protein sequence ID" value="BAE98892.1"/>
    <property type="molecule type" value="mRNA"/>
</dbReference>
<dbReference type="PIR" id="T48346">
    <property type="entry name" value="T48346"/>
</dbReference>
<dbReference type="RefSeq" id="NP_195945.1">
    <property type="nucleotide sequence ID" value="NM_120403.3"/>
</dbReference>
<dbReference type="SMR" id="Q9LYW0"/>
<dbReference type="FunCoup" id="Q9LYW0">
    <property type="interactions" value="254"/>
</dbReference>
<dbReference type="GlyGen" id="Q9LYW0">
    <property type="glycosylation" value="1 site"/>
</dbReference>
<dbReference type="PaxDb" id="3702-AT5G03250.1"/>
<dbReference type="ProteomicsDB" id="243133"/>
<dbReference type="EnsemblPlants" id="AT5G03250.1">
    <property type="protein sequence ID" value="AT5G03250.1"/>
    <property type="gene ID" value="AT5G03250"/>
</dbReference>
<dbReference type="GeneID" id="831894"/>
<dbReference type="Gramene" id="AT5G03250.1">
    <property type="protein sequence ID" value="AT5G03250.1"/>
    <property type="gene ID" value="AT5G03250"/>
</dbReference>
<dbReference type="KEGG" id="ath:AT5G03250"/>
<dbReference type="Araport" id="AT5G03250"/>
<dbReference type="TAIR" id="AT5G03250"/>
<dbReference type="eggNOG" id="ENOG502QR2D">
    <property type="taxonomic scope" value="Eukaryota"/>
</dbReference>
<dbReference type="HOGENOM" id="CLU_005994_6_2_1"/>
<dbReference type="InParanoid" id="Q9LYW0"/>
<dbReference type="OMA" id="CSGMDWW"/>
<dbReference type="PhylomeDB" id="Q9LYW0"/>
<dbReference type="UniPathway" id="UPA00143"/>
<dbReference type="PRO" id="PR:Q9LYW0"/>
<dbReference type="Proteomes" id="UP000006548">
    <property type="component" value="Chromosome 5"/>
</dbReference>
<dbReference type="ExpressionAtlas" id="Q9LYW0">
    <property type="expression patterns" value="baseline and differential"/>
</dbReference>
<dbReference type="GO" id="GO:0016567">
    <property type="term" value="P:protein ubiquitination"/>
    <property type="evidence" value="ECO:0007669"/>
    <property type="project" value="UniProtKB-UniPathway"/>
</dbReference>
<dbReference type="CDD" id="cd18312">
    <property type="entry name" value="BTB_POZ_NPY3-like"/>
    <property type="match status" value="1"/>
</dbReference>
<dbReference type="Gene3D" id="3.30.710.10">
    <property type="entry name" value="Potassium Channel Kv1.1, Chain A"/>
    <property type="match status" value="1"/>
</dbReference>
<dbReference type="InterPro" id="IPR000210">
    <property type="entry name" value="BTB/POZ_dom"/>
</dbReference>
<dbReference type="InterPro" id="IPR043454">
    <property type="entry name" value="NPH3/RPT2-like"/>
</dbReference>
<dbReference type="InterPro" id="IPR027356">
    <property type="entry name" value="NPH3_dom"/>
</dbReference>
<dbReference type="InterPro" id="IPR011333">
    <property type="entry name" value="SKP1/BTB/POZ_sf"/>
</dbReference>
<dbReference type="PANTHER" id="PTHR32370">
    <property type="entry name" value="OS12G0117600 PROTEIN"/>
    <property type="match status" value="1"/>
</dbReference>
<dbReference type="Pfam" id="PF00651">
    <property type="entry name" value="BTB"/>
    <property type="match status" value="1"/>
</dbReference>
<dbReference type="Pfam" id="PF03000">
    <property type="entry name" value="NPH3"/>
    <property type="match status" value="1"/>
</dbReference>
<dbReference type="SMART" id="SM00225">
    <property type="entry name" value="BTB"/>
    <property type="match status" value="1"/>
</dbReference>
<dbReference type="SUPFAM" id="SSF54695">
    <property type="entry name" value="POZ domain"/>
    <property type="match status" value="1"/>
</dbReference>
<dbReference type="PROSITE" id="PS50097">
    <property type="entry name" value="BTB"/>
    <property type="match status" value="1"/>
</dbReference>
<dbReference type="PROSITE" id="PS51649">
    <property type="entry name" value="NPH3"/>
    <property type="match status" value="1"/>
</dbReference>
<organism>
    <name type="scientific">Arabidopsis thaliana</name>
    <name type="common">Mouse-ear cress</name>
    <dbReference type="NCBI Taxonomy" id="3702"/>
    <lineage>
        <taxon>Eukaryota</taxon>
        <taxon>Viridiplantae</taxon>
        <taxon>Streptophyta</taxon>
        <taxon>Embryophyta</taxon>
        <taxon>Tracheophyta</taxon>
        <taxon>Spermatophyta</taxon>
        <taxon>Magnoliopsida</taxon>
        <taxon>eudicotyledons</taxon>
        <taxon>Gunneridae</taxon>
        <taxon>Pentapetalae</taxon>
        <taxon>rosids</taxon>
        <taxon>malvids</taxon>
        <taxon>Brassicales</taxon>
        <taxon>Brassicaceae</taxon>
        <taxon>Camelineae</taxon>
        <taxon>Arabidopsis</taxon>
    </lineage>
</organism>
<sequence>MAFMRLGSKSEAFHREGQTWLCTTGLVSDVTIEVGDMKFHLHKFPLLSRSGLLERLIEESSTDDGSGCVLSLDEIPGGGKTFELVTKFCYGVKIELTAFNVVSLRCAAEYLEMTDNYGEGNLVGMTETFLNEVFGNWTDSIKALQTCEEVIDYAEDLHIISRCVDSLAVKACADPSLFNWPVGGGKNATSGQNTEDESHLWNGISASGKMLQHTGEDWWFDDASFLSLPLFKRLITAIEARGMKLENIAMAVMYYTRKHVPLMNRQVNMDEQVIETPNPSEEDQKTCLEEIVGLLPSKKGVNPTKFLLRLLQTAMVLHASQSSRENLERRIGNQLDQAALVDLLIPNMGYSETLYDVECVLRMIEQFVSSTEQAGIVPSPCIIEEGHLVKDGADLLTPTTLVATLVDGYLAEVAPDVNLKLAKFEAIAAAIPDYARPLDDGVYHAIDVYLKAHPWITDSEREHICRLMNCQKLSLEASTHAAQNERLPLRVIVQVLFFEQLRLRTSVSGWFFVSENLDNPDNQHGANGGLLKPRGENVRERVSELEKECMNMKQELHKLVRTKRSWKNFTRKLNFKKKSECCKPKDQATPAI</sequence>